<gene>
    <name type="ORF">DDB_G0293186</name>
</gene>
<reference key="1">
    <citation type="journal article" date="2005" name="Nature">
        <title>The genome of the social amoeba Dictyostelium discoideum.</title>
        <authorList>
            <person name="Eichinger L."/>
            <person name="Pachebat J.A."/>
            <person name="Gloeckner G."/>
            <person name="Rajandream M.A."/>
            <person name="Sucgang R."/>
            <person name="Berriman M."/>
            <person name="Song J."/>
            <person name="Olsen R."/>
            <person name="Szafranski K."/>
            <person name="Xu Q."/>
            <person name="Tunggal B."/>
            <person name="Kummerfeld S."/>
            <person name="Madera M."/>
            <person name="Konfortov B.A."/>
            <person name="Rivero F."/>
            <person name="Bankier A.T."/>
            <person name="Lehmann R."/>
            <person name="Hamlin N."/>
            <person name="Davies R."/>
            <person name="Gaudet P."/>
            <person name="Fey P."/>
            <person name="Pilcher K."/>
            <person name="Chen G."/>
            <person name="Saunders D."/>
            <person name="Sodergren E.J."/>
            <person name="Davis P."/>
            <person name="Kerhornou A."/>
            <person name="Nie X."/>
            <person name="Hall N."/>
            <person name="Anjard C."/>
            <person name="Hemphill L."/>
            <person name="Bason N."/>
            <person name="Farbrother P."/>
            <person name="Desany B."/>
            <person name="Just E."/>
            <person name="Morio T."/>
            <person name="Rost R."/>
            <person name="Churcher C.M."/>
            <person name="Cooper J."/>
            <person name="Haydock S."/>
            <person name="van Driessche N."/>
            <person name="Cronin A."/>
            <person name="Goodhead I."/>
            <person name="Muzny D.M."/>
            <person name="Mourier T."/>
            <person name="Pain A."/>
            <person name="Lu M."/>
            <person name="Harper D."/>
            <person name="Lindsay R."/>
            <person name="Hauser H."/>
            <person name="James K.D."/>
            <person name="Quiles M."/>
            <person name="Madan Babu M."/>
            <person name="Saito T."/>
            <person name="Buchrieser C."/>
            <person name="Wardroper A."/>
            <person name="Felder M."/>
            <person name="Thangavelu M."/>
            <person name="Johnson D."/>
            <person name="Knights A."/>
            <person name="Loulseged H."/>
            <person name="Mungall K.L."/>
            <person name="Oliver K."/>
            <person name="Price C."/>
            <person name="Quail M.A."/>
            <person name="Urushihara H."/>
            <person name="Hernandez J."/>
            <person name="Rabbinowitsch E."/>
            <person name="Steffen D."/>
            <person name="Sanders M."/>
            <person name="Ma J."/>
            <person name="Kohara Y."/>
            <person name="Sharp S."/>
            <person name="Simmonds M.N."/>
            <person name="Spiegler S."/>
            <person name="Tivey A."/>
            <person name="Sugano S."/>
            <person name="White B."/>
            <person name="Walker D."/>
            <person name="Woodward J.R."/>
            <person name="Winckler T."/>
            <person name="Tanaka Y."/>
            <person name="Shaulsky G."/>
            <person name="Schleicher M."/>
            <person name="Weinstock G.M."/>
            <person name="Rosenthal A."/>
            <person name="Cox E.C."/>
            <person name="Chisholm R.L."/>
            <person name="Gibbs R.A."/>
            <person name="Loomis W.F."/>
            <person name="Platzer M."/>
            <person name="Kay R.R."/>
            <person name="Williams J.G."/>
            <person name="Dear P.H."/>
            <person name="Noegel A.A."/>
            <person name="Barrell B.G."/>
            <person name="Kuspa A."/>
        </authorList>
    </citation>
    <scope>NUCLEOTIDE SEQUENCE [LARGE SCALE GENOMIC DNA]</scope>
    <source>
        <strain>AX4</strain>
    </source>
</reference>
<comment type="function">
    <text evidence="1">May serve to lubricate the movement of the cellulose microfibrils during cell growth and wall extension and/or may serve to maintain the fluid state of the slug cell wall.</text>
</comment>
<comment type="subcellular location">
    <subcellularLocation>
        <location evidence="3">Secreted</location>
    </subcellularLocation>
</comment>
<comment type="similarity">
    <text evidence="3">Belongs to the expansin family. Expansin A subfamily.</text>
</comment>
<proteinExistence type="inferred from homology"/>
<feature type="signal peptide" evidence="2">
    <location>
        <begin position="1"/>
        <end position="20"/>
    </location>
</feature>
<feature type="chain" id="PRO_0000383955" description="Expansin-like protein DDB_G0293186">
    <location>
        <begin position="21"/>
        <end position="421"/>
    </location>
</feature>
<feature type="domain" description="Expansin-like EG45">
    <location>
        <begin position="43"/>
        <end position="139"/>
    </location>
</feature>
<feature type="glycosylation site" description="N-linked (GlcNAc...) asparagine" evidence="2">
    <location>
        <position position="19"/>
    </location>
</feature>
<feature type="glycosylation site" description="N-linked (GlcNAc...) asparagine" evidence="2">
    <location>
        <position position="117"/>
    </location>
</feature>
<feature type="glycosylation site" description="N-linked (GlcNAc...) asparagine" evidence="2">
    <location>
        <position position="391"/>
    </location>
</feature>
<feature type="disulfide bond" evidence="1">
    <location>
        <begin position="46"/>
        <end position="70"/>
    </location>
</feature>
<feature type="disulfide bond" evidence="1">
    <location>
        <begin position="73"/>
        <end position="134"/>
    </location>
</feature>
<accession>Q54C76</accession>
<name>EXPLY_DICDI</name>
<organism>
    <name type="scientific">Dictyostelium discoideum</name>
    <name type="common">Social amoeba</name>
    <dbReference type="NCBI Taxonomy" id="44689"/>
    <lineage>
        <taxon>Eukaryota</taxon>
        <taxon>Amoebozoa</taxon>
        <taxon>Evosea</taxon>
        <taxon>Eumycetozoa</taxon>
        <taxon>Dictyostelia</taxon>
        <taxon>Dictyosteliales</taxon>
        <taxon>Dictyosteliaceae</taxon>
        <taxon>Dictyostelium</taxon>
    </lineage>
</organism>
<dbReference type="EMBL" id="AAFI02000199">
    <property type="protein sequence ID" value="EAL60945.1"/>
    <property type="molecule type" value="Genomic_DNA"/>
</dbReference>
<dbReference type="RefSeq" id="XP_629343.1">
    <property type="nucleotide sequence ID" value="XM_629341.1"/>
</dbReference>
<dbReference type="SMR" id="Q54C76"/>
<dbReference type="FunCoup" id="Q54C76">
    <property type="interactions" value="744"/>
</dbReference>
<dbReference type="GlyGen" id="Q54C76">
    <property type="glycosylation" value="4 sites"/>
</dbReference>
<dbReference type="PaxDb" id="44689-DDB0219828"/>
<dbReference type="EnsemblProtists" id="EAL60945">
    <property type="protein sequence ID" value="EAL60945"/>
    <property type="gene ID" value="DDB_G0293186"/>
</dbReference>
<dbReference type="GeneID" id="8629067"/>
<dbReference type="KEGG" id="ddi:DDB_G0293186"/>
<dbReference type="dictyBase" id="DDB_G0293186"/>
<dbReference type="VEuPathDB" id="AmoebaDB:DDB_G0293186"/>
<dbReference type="eggNOG" id="ENOG502RH4J">
    <property type="taxonomic scope" value="Eukaryota"/>
</dbReference>
<dbReference type="HOGENOM" id="CLU_038219_0_0_1"/>
<dbReference type="InParanoid" id="Q54C76"/>
<dbReference type="OMA" id="CPANDEN"/>
<dbReference type="PhylomeDB" id="Q54C76"/>
<dbReference type="PRO" id="PR:Q54C76"/>
<dbReference type="Proteomes" id="UP000002195">
    <property type="component" value="Chromosome 6"/>
</dbReference>
<dbReference type="GO" id="GO:0005576">
    <property type="term" value="C:extracellular region"/>
    <property type="evidence" value="ECO:0007669"/>
    <property type="project" value="UniProtKB-SubCell"/>
</dbReference>
<dbReference type="CDD" id="cd22271">
    <property type="entry name" value="DPBB_EXP_N-like"/>
    <property type="match status" value="1"/>
</dbReference>
<dbReference type="Gene3D" id="2.60.40.760">
    <property type="entry name" value="Expansin, cellulose-binding-like domain"/>
    <property type="match status" value="1"/>
</dbReference>
<dbReference type="Gene3D" id="2.40.40.10">
    <property type="entry name" value="RlpA-like domain"/>
    <property type="match status" value="1"/>
</dbReference>
<dbReference type="InterPro" id="IPR036749">
    <property type="entry name" value="Expansin_CBD_sf"/>
</dbReference>
<dbReference type="InterPro" id="IPR051477">
    <property type="entry name" value="Expansin_CellWall"/>
</dbReference>
<dbReference type="InterPro" id="IPR036908">
    <property type="entry name" value="RlpA-like_sf"/>
</dbReference>
<dbReference type="PANTHER" id="PTHR31836">
    <property type="match status" value="1"/>
</dbReference>
<dbReference type="PANTHER" id="PTHR31836:SF11">
    <property type="entry name" value="EXPANSIN-LIKE PROTEIN 8-RELATED"/>
    <property type="match status" value="1"/>
</dbReference>
<dbReference type="SUPFAM" id="SSF50685">
    <property type="entry name" value="Barwin-like endoglucanases"/>
    <property type="match status" value="1"/>
</dbReference>
<evidence type="ECO:0000250" key="1"/>
<evidence type="ECO:0000255" key="2"/>
<evidence type="ECO:0000305" key="3"/>
<keyword id="KW-1015">Disulfide bond</keyword>
<keyword id="KW-0325">Glycoprotein</keyword>
<keyword id="KW-1185">Reference proteome</keyword>
<keyword id="KW-0964">Secreted</keyword>
<keyword id="KW-0732">Signal</keyword>
<protein>
    <recommendedName>
        <fullName>Expansin-like protein DDB_G0293186</fullName>
    </recommendedName>
</protein>
<sequence>MRTLKLIILLILSTFKTINSTNIKISECGKARCVPNGESSTDGGQCGLPLPGVIGTAALNVFAFDKGSRCGECYELTGPLGSTVVMITDGCDAGDACQQKELFNFIISKKDFNKIGNSSAYGNIYSLGYQKVSCGFSGYIKAVFGGGSIAGRPDYSYYFHVSFSNFNIGIKQVQLMGTGMSRISTLKRDLGKYTWNQEGGGAKLQFPATLILTGIDGQTLSYKFNKPPSGQMIDIKKQFAPPTQKSSSALVLRESEKKCEMGKLPDYVYQESLGLGWVTYFSWKFDYINLESHETNKKASMGKKLIQVELKGYGGLHFTREGGFQTKYIKSLSFTIRAAPPISALQVYVGQVGSYTLPTLGWQWTEITIPASKIKSKNDIEYSLSFYNNKNQTNTLWIDNIKWNFTPDCPPTPAFVTDKFI</sequence>